<keyword id="KW-0479">Metal-binding</keyword>
<keyword id="KW-0520">NAD</keyword>
<keyword id="KW-0560">Oxidoreductase</keyword>
<keyword id="KW-1185">Reference proteome</keyword>
<keyword id="KW-0862">Zinc</keyword>
<reference key="1">
    <citation type="journal article" date="1998" name="Nature">
        <title>Deciphering the biology of Mycobacterium tuberculosis from the complete genome sequence.</title>
        <authorList>
            <person name="Cole S.T."/>
            <person name="Brosch R."/>
            <person name="Parkhill J."/>
            <person name="Garnier T."/>
            <person name="Churcher C.M."/>
            <person name="Harris D.E."/>
            <person name="Gordon S.V."/>
            <person name="Eiglmeier K."/>
            <person name="Gas S."/>
            <person name="Barry C.E. III"/>
            <person name="Tekaia F."/>
            <person name="Badcock K."/>
            <person name="Basham D."/>
            <person name="Brown D."/>
            <person name="Chillingworth T."/>
            <person name="Connor R."/>
            <person name="Davies R.M."/>
            <person name="Devlin K."/>
            <person name="Feltwell T."/>
            <person name="Gentles S."/>
            <person name="Hamlin N."/>
            <person name="Holroyd S."/>
            <person name="Hornsby T."/>
            <person name="Jagels K."/>
            <person name="Krogh A."/>
            <person name="McLean J."/>
            <person name="Moule S."/>
            <person name="Murphy L.D."/>
            <person name="Oliver S."/>
            <person name="Osborne J."/>
            <person name="Quail M.A."/>
            <person name="Rajandream M.A."/>
            <person name="Rogers J."/>
            <person name="Rutter S."/>
            <person name="Seeger K."/>
            <person name="Skelton S."/>
            <person name="Squares S."/>
            <person name="Squares R."/>
            <person name="Sulston J.E."/>
            <person name="Taylor K."/>
            <person name="Whitehead S."/>
            <person name="Barrell B.G."/>
        </authorList>
    </citation>
    <scope>NUCLEOTIDE SEQUENCE [LARGE SCALE GENOMIC DNA]</scope>
    <source>
        <strain>ATCC 25618 / H37Rv</strain>
    </source>
</reference>
<reference key="2">
    <citation type="journal article" date="2003" name="FEMS Microbiol. Lett.">
        <title>mymA operon of Mycobacterium tuberculosis: its regulation and importance in the cell envelope.</title>
        <authorList>
            <person name="Singh A."/>
            <person name="Jain S."/>
            <person name="Gupta S."/>
            <person name="Das T."/>
            <person name="Tyagi A.K."/>
        </authorList>
    </citation>
    <scope>INDUCTION</scope>
    <scope>GENE NAME</scope>
</reference>
<reference key="3">
    <citation type="journal article" date="2005" name="J. Bacteriol.">
        <title>Requirement of the mymA operon for appropriate cell wall ultrastructure and persistence of Mycobacterium tuberculosis in the spleens of guinea pigs.</title>
        <authorList>
            <person name="Singh A."/>
            <person name="Gupta R."/>
            <person name="Vishwakarma R.A."/>
            <person name="Narayanan P.R."/>
            <person name="Paramasivan C.N."/>
            <person name="Ramanathan V.D."/>
            <person name="Tyagi A.K."/>
        </authorList>
    </citation>
    <scope>FUNCTION</scope>
    <scope>DISRUPTION PHENOTYPE</scope>
    <source>
        <strain>Erdman</strain>
    </source>
</reference>
<reference key="4">
    <citation type="journal article" date="2007" name="Tuberculosis">
        <title>The acid-induced operon Rv3083-Rv3089 is required for growth of Mycobacterium tuberculosis in macrophages.</title>
        <authorList>
            <person name="Cheruvu M."/>
            <person name="Plikaytis B.B."/>
            <person name="Shinnick T.M."/>
        </authorList>
    </citation>
    <scope>DISRUPTION PHENOTYPE</scope>
    <source>
        <strain>ATCC 25618 / H37Rv</strain>
    </source>
</reference>
<reference key="5">
    <citation type="journal article" date="2011" name="Mol. Cell. Proteomics">
        <title>Proteogenomic analysis of Mycobacterium tuberculosis by high resolution mass spectrometry.</title>
        <authorList>
            <person name="Kelkar D.S."/>
            <person name="Kumar D."/>
            <person name="Kumar P."/>
            <person name="Balakrishnan L."/>
            <person name="Muthusamy B."/>
            <person name="Yadav A.K."/>
            <person name="Shrivastava P."/>
            <person name="Marimuthu A."/>
            <person name="Anand S."/>
            <person name="Sundaram H."/>
            <person name="Kingsbury R."/>
            <person name="Harsha H.C."/>
            <person name="Nair B."/>
            <person name="Prasad T.S."/>
            <person name="Chauhan D.S."/>
            <person name="Katoch K."/>
            <person name="Katoch V.M."/>
            <person name="Kumar P."/>
            <person name="Chaerkady R."/>
            <person name="Ramachandran S."/>
            <person name="Dash D."/>
            <person name="Pandey A."/>
        </authorList>
    </citation>
    <scope>IDENTIFICATION BY MASS SPECTROMETRY [LARGE SCALE ANALYSIS]</scope>
    <source>
        <strain>ATCC 25618 / H37Rv</strain>
    </source>
</reference>
<dbReference type="EC" id="1.1.1.1"/>
<dbReference type="EMBL" id="AL123456">
    <property type="protein sequence ID" value="CCP45895.1"/>
    <property type="molecule type" value="Genomic_DNA"/>
</dbReference>
<dbReference type="PIR" id="B70853">
    <property type="entry name" value="B70853"/>
</dbReference>
<dbReference type="RefSeq" id="NP_217602.1">
    <property type="nucleotide sequence ID" value="NC_000962.3"/>
</dbReference>
<dbReference type="RefSeq" id="WP_003416075.1">
    <property type="nucleotide sequence ID" value="NZ_NVQJ01000011.1"/>
</dbReference>
<dbReference type="SMR" id="P9WQB9"/>
<dbReference type="FunCoup" id="P9WQB9">
    <property type="interactions" value="343"/>
</dbReference>
<dbReference type="STRING" id="83332.Rv3086"/>
<dbReference type="PaxDb" id="83332-Rv3086"/>
<dbReference type="GeneID" id="888654"/>
<dbReference type="KEGG" id="mtu:Rv3086"/>
<dbReference type="KEGG" id="mtv:RVBD_3086"/>
<dbReference type="TubercuList" id="Rv3086"/>
<dbReference type="eggNOG" id="COG1062">
    <property type="taxonomic scope" value="Bacteria"/>
</dbReference>
<dbReference type="InParanoid" id="P9WQB9"/>
<dbReference type="OrthoDB" id="334894at2"/>
<dbReference type="PhylomeDB" id="P9WQB9"/>
<dbReference type="Proteomes" id="UP000001584">
    <property type="component" value="Chromosome"/>
</dbReference>
<dbReference type="GO" id="GO:0005829">
    <property type="term" value="C:cytosol"/>
    <property type="evidence" value="ECO:0000318"/>
    <property type="project" value="GO_Central"/>
</dbReference>
<dbReference type="GO" id="GO:0009274">
    <property type="term" value="C:peptidoglycan-based cell wall"/>
    <property type="evidence" value="ECO:0007005"/>
    <property type="project" value="MTBBASE"/>
</dbReference>
<dbReference type="GO" id="GO:0004022">
    <property type="term" value="F:alcohol dehydrogenase (NAD+) activity"/>
    <property type="evidence" value="ECO:0000318"/>
    <property type="project" value="GO_Central"/>
</dbReference>
<dbReference type="GO" id="GO:0051903">
    <property type="term" value="F:S-(hydroxymethyl)glutathione dehydrogenase [NAD(P)+] activity"/>
    <property type="evidence" value="ECO:0000318"/>
    <property type="project" value="GO_Central"/>
</dbReference>
<dbReference type="GO" id="GO:0008270">
    <property type="term" value="F:zinc ion binding"/>
    <property type="evidence" value="ECO:0000318"/>
    <property type="project" value="GO_Central"/>
</dbReference>
<dbReference type="GO" id="GO:0051701">
    <property type="term" value="P:biological process involved in interaction with host"/>
    <property type="evidence" value="ECO:0000315"/>
    <property type="project" value="MTBBASE"/>
</dbReference>
<dbReference type="GO" id="GO:0046294">
    <property type="term" value="P:formaldehyde catabolic process"/>
    <property type="evidence" value="ECO:0000318"/>
    <property type="project" value="GO_Central"/>
</dbReference>
<dbReference type="GO" id="GO:0010447">
    <property type="term" value="P:response to acidic pH"/>
    <property type="evidence" value="ECO:0000270"/>
    <property type="project" value="MTBBASE"/>
</dbReference>
<dbReference type="CDD" id="cd08279">
    <property type="entry name" value="Zn_ADH_class_III"/>
    <property type="match status" value="1"/>
</dbReference>
<dbReference type="FunFam" id="3.40.50.720:FF:000482">
    <property type="entry name" value="Alcohol dehydrogenase D"/>
    <property type="match status" value="1"/>
</dbReference>
<dbReference type="Gene3D" id="3.90.180.10">
    <property type="entry name" value="Medium-chain alcohol dehydrogenases, catalytic domain"/>
    <property type="match status" value="1"/>
</dbReference>
<dbReference type="Gene3D" id="3.40.50.720">
    <property type="entry name" value="NAD(P)-binding Rossmann-like Domain"/>
    <property type="match status" value="1"/>
</dbReference>
<dbReference type="InterPro" id="IPR013149">
    <property type="entry name" value="ADH-like_C"/>
</dbReference>
<dbReference type="InterPro" id="IPR013154">
    <property type="entry name" value="ADH-like_N"/>
</dbReference>
<dbReference type="InterPro" id="IPR023921">
    <property type="entry name" value="ADH_Zn_actinomycetes"/>
</dbReference>
<dbReference type="InterPro" id="IPR002328">
    <property type="entry name" value="ADH_Zn_CS"/>
</dbReference>
<dbReference type="InterPro" id="IPR011032">
    <property type="entry name" value="GroES-like_sf"/>
</dbReference>
<dbReference type="InterPro" id="IPR036291">
    <property type="entry name" value="NAD(P)-bd_dom_sf"/>
</dbReference>
<dbReference type="InterPro" id="IPR020843">
    <property type="entry name" value="PKS_ER"/>
</dbReference>
<dbReference type="NCBIfam" id="TIGR03989">
    <property type="entry name" value="Rxyl_3153"/>
    <property type="match status" value="1"/>
</dbReference>
<dbReference type="PANTHER" id="PTHR43880">
    <property type="entry name" value="ALCOHOL DEHYDROGENASE"/>
    <property type="match status" value="1"/>
</dbReference>
<dbReference type="PANTHER" id="PTHR43880:SF12">
    <property type="entry name" value="ALCOHOL DEHYDROGENASE CLASS-3"/>
    <property type="match status" value="1"/>
</dbReference>
<dbReference type="Pfam" id="PF08240">
    <property type="entry name" value="ADH_N"/>
    <property type="match status" value="1"/>
</dbReference>
<dbReference type="Pfam" id="PF00107">
    <property type="entry name" value="ADH_zinc_N"/>
    <property type="match status" value="1"/>
</dbReference>
<dbReference type="SMART" id="SM00829">
    <property type="entry name" value="PKS_ER"/>
    <property type="match status" value="1"/>
</dbReference>
<dbReference type="SUPFAM" id="SSF50129">
    <property type="entry name" value="GroES-like"/>
    <property type="match status" value="2"/>
</dbReference>
<dbReference type="SUPFAM" id="SSF51735">
    <property type="entry name" value="NAD(P)-binding Rossmann-fold domains"/>
    <property type="match status" value="1"/>
</dbReference>
<dbReference type="PROSITE" id="PS00059">
    <property type="entry name" value="ADH_ZINC"/>
    <property type="match status" value="1"/>
</dbReference>
<feature type="chain" id="PRO_0000420879" description="Putative alcohol dehydrogenase D">
    <location>
        <begin position="1"/>
        <end position="368"/>
    </location>
</feature>
<feature type="binding site" evidence="1">
    <location>
        <position position="40"/>
    </location>
    <ligand>
        <name>Zn(2+)</name>
        <dbReference type="ChEBI" id="CHEBI:29105"/>
        <label>1</label>
        <note>catalytic</note>
    </ligand>
</feature>
<feature type="binding site" evidence="1">
    <location>
        <position position="61"/>
    </location>
    <ligand>
        <name>Zn(2+)</name>
        <dbReference type="ChEBI" id="CHEBI:29105"/>
        <label>1</label>
        <note>catalytic</note>
    </ligand>
</feature>
<feature type="binding site" evidence="1">
    <location>
        <position position="91"/>
    </location>
    <ligand>
        <name>Zn(2+)</name>
        <dbReference type="ChEBI" id="CHEBI:29105"/>
        <label>2</label>
    </ligand>
</feature>
<feature type="binding site" evidence="1">
    <location>
        <position position="94"/>
    </location>
    <ligand>
        <name>Zn(2+)</name>
        <dbReference type="ChEBI" id="CHEBI:29105"/>
        <label>2</label>
    </ligand>
</feature>
<feature type="binding site" evidence="1">
    <location>
        <position position="97"/>
    </location>
    <ligand>
        <name>Zn(2+)</name>
        <dbReference type="ChEBI" id="CHEBI:29105"/>
        <label>2</label>
    </ligand>
</feature>
<feature type="binding site" evidence="1">
    <location>
        <position position="105"/>
    </location>
    <ligand>
        <name>Zn(2+)</name>
        <dbReference type="ChEBI" id="CHEBI:29105"/>
        <label>2</label>
    </ligand>
</feature>
<feature type="binding site" evidence="1">
    <location>
        <position position="167"/>
    </location>
    <ligand>
        <name>Zn(2+)</name>
        <dbReference type="ChEBI" id="CHEBI:29105"/>
        <label>1</label>
        <note>catalytic</note>
    </ligand>
</feature>
<protein>
    <recommendedName>
        <fullName>Putative alcohol dehydrogenase D</fullName>
        <ecNumber>1.1.1.1</ecNumber>
    </recommendedName>
</protein>
<sequence>MKTTAAVLFEAGKPFELMELDLDGPGPGEVLVKYTAAGLCHSDLHLTDGDLPPRFPIVGGHEGSGVIEEVGAGVTRVKPGDHVVCSFIPNCGTCRYCCTGRQNLCDMGATILEGCMPDGSFRFHSQGTDFGAMCMLGTFAERATVSQHSVVKVDDWLPLETAVLVGCGVPSGWGTAVNAGNLRAGDTAVIYGVGGLGINAVQGATAAGCKYVVVVDPVAFKRETALKFGATHAFADAASAAAKVDELTWGQGADAALILVGTVDDEVVSAATAVIGKGGTVVITGLADPAKLTVHVSGTDLTLHEKTIKGSLFGSCNPQYDIVRLLRLYDAGQLMLDELVTTTYNLEQVNQGYQDLRDGKNIRGVIVH</sequence>
<accession>P9WQB9</accession>
<accession>F2GNY2</accession>
<accession>L0TD46</accession>
<accession>O53303</accession>
<accession>Q7D655</accession>
<proteinExistence type="evidence at protein level"/>
<organism>
    <name type="scientific">Mycobacterium tuberculosis (strain ATCC 25618 / H37Rv)</name>
    <dbReference type="NCBI Taxonomy" id="83332"/>
    <lineage>
        <taxon>Bacteria</taxon>
        <taxon>Bacillati</taxon>
        <taxon>Actinomycetota</taxon>
        <taxon>Actinomycetes</taxon>
        <taxon>Mycobacteriales</taxon>
        <taxon>Mycobacteriaceae</taxon>
        <taxon>Mycobacterium</taxon>
        <taxon>Mycobacterium tuberculosis complex</taxon>
    </lineage>
</organism>
<evidence type="ECO:0000250" key="1"/>
<evidence type="ECO:0000269" key="2">
    <source>
    </source>
</evidence>
<evidence type="ECO:0000269" key="3">
    <source>
    </source>
</evidence>
<evidence type="ECO:0000269" key="4">
    <source>
    </source>
</evidence>
<evidence type="ECO:0000305" key="5"/>
<name>ADHD_MYCTU</name>
<comment type="function">
    <text evidence="3">Required for maintaining the appropriate mycolic acid composition and permeability of the envelope on its exposure to acidic pH.</text>
</comment>
<comment type="catalytic activity">
    <reaction>
        <text>a primary alcohol + NAD(+) = an aldehyde + NADH + H(+)</text>
        <dbReference type="Rhea" id="RHEA:10736"/>
        <dbReference type="ChEBI" id="CHEBI:15378"/>
        <dbReference type="ChEBI" id="CHEBI:15734"/>
        <dbReference type="ChEBI" id="CHEBI:17478"/>
        <dbReference type="ChEBI" id="CHEBI:57540"/>
        <dbReference type="ChEBI" id="CHEBI:57945"/>
        <dbReference type="EC" id="1.1.1.1"/>
    </reaction>
</comment>
<comment type="catalytic activity">
    <reaction>
        <text>a secondary alcohol + NAD(+) = a ketone + NADH + H(+)</text>
        <dbReference type="Rhea" id="RHEA:10740"/>
        <dbReference type="ChEBI" id="CHEBI:15378"/>
        <dbReference type="ChEBI" id="CHEBI:17087"/>
        <dbReference type="ChEBI" id="CHEBI:35681"/>
        <dbReference type="ChEBI" id="CHEBI:57540"/>
        <dbReference type="ChEBI" id="CHEBI:57945"/>
        <dbReference type="EC" id="1.1.1.1"/>
    </reaction>
</comment>
<comment type="cofactor">
    <cofactor evidence="1">
        <name>Zn(2+)</name>
        <dbReference type="ChEBI" id="CHEBI:29105"/>
    </cofactor>
    <text evidence="1">Binds 2 Zn(2+) ions per subunit.</text>
</comment>
<comment type="induction">
    <text evidence="2">Expression is controlled by VirS. Induced at acidic pH and in macrophages.</text>
</comment>
<comment type="disruption phenotype">
    <text evidence="3 4">Inactivation of the mymA operon causes altered cell wall structure, reduced contents and altered composition of mycolic acids along with the accumulation of saturated C24 and C26 fatty acids, and enhanced susceptibility to antibiotics, detergents and acidic pH. Also impairs ability to survive in macrophages.</text>
</comment>
<comment type="similarity">
    <text evidence="5">Belongs to the zinc-containing alcohol dehydrogenase family.</text>
</comment>
<gene>
    <name type="primary">adhD</name>
    <name type="ordered locus">Rv3086</name>
</gene>